<feature type="chain" id="PRO_0000083324" description="Kunitz-type serine protease inhibitor DrTI">
    <location>
        <begin position="1"/>
        <end position="185"/>
    </location>
</feature>
<feature type="site" description="Reactive bond" evidence="2">
    <location>
        <begin position="68"/>
        <end position="69"/>
    </location>
</feature>
<feature type="disulfide bond" evidence="1">
    <location>
        <begin position="44"/>
        <end position="89"/>
    </location>
</feature>
<feature type="disulfide bond" evidence="1">
    <location>
        <begin position="139"/>
        <end position="147"/>
    </location>
</feature>
<feature type="strand" evidence="5">
    <location>
        <begin position="18"/>
        <end position="24"/>
    </location>
</feature>
<feature type="strand" evidence="5">
    <location>
        <begin position="28"/>
        <end position="30"/>
    </location>
</feature>
<feature type="strand" evidence="5">
    <location>
        <begin position="33"/>
        <end position="37"/>
    </location>
</feature>
<feature type="strand" evidence="5">
    <location>
        <begin position="47"/>
        <end position="50"/>
    </location>
</feature>
<feature type="strand" evidence="5">
    <location>
        <begin position="61"/>
        <end position="64"/>
    </location>
</feature>
<feature type="strand" evidence="5">
    <location>
        <begin position="69"/>
        <end position="72"/>
    </location>
</feature>
<feature type="strand" evidence="5">
    <location>
        <begin position="79"/>
        <end position="85"/>
    </location>
</feature>
<feature type="strand" evidence="5">
    <location>
        <begin position="94"/>
        <end position="98"/>
    </location>
</feature>
<feature type="strand" evidence="5">
    <location>
        <begin position="100"/>
        <end position="103"/>
    </location>
</feature>
<feature type="strand" evidence="5">
    <location>
        <begin position="105"/>
        <end position="108"/>
    </location>
</feature>
<feature type="turn" evidence="5">
    <location>
        <begin position="111"/>
        <end position="113"/>
    </location>
</feature>
<feature type="helix" evidence="5">
    <location>
        <begin position="116"/>
        <end position="118"/>
    </location>
</feature>
<feature type="strand" evidence="5">
    <location>
        <begin position="122"/>
        <end position="128"/>
    </location>
</feature>
<feature type="strand" evidence="5">
    <location>
        <begin position="130"/>
        <end position="132"/>
    </location>
</feature>
<feature type="strand" evidence="5">
    <location>
        <begin position="134"/>
        <end position="143"/>
    </location>
</feature>
<feature type="strand" evidence="5">
    <location>
        <begin position="148"/>
        <end position="153"/>
    </location>
</feature>
<feature type="strand" evidence="5">
    <location>
        <begin position="155"/>
        <end position="157"/>
    </location>
</feature>
<feature type="strand" evidence="5">
    <location>
        <begin position="159"/>
        <end position="162"/>
    </location>
</feature>
<feature type="strand" evidence="5">
    <location>
        <begin position="164"/>
        <end position="167"/>
    </location>
</feature>
<feature type="strand" evidence="5">
    <location>
        <begin position="172"/>
        <end position="175"/>
    </location>
</feature>
<keyword id="KW-0002">3D-structure</keyword>
<keyword id="KW-0903">Direct protein sequencing</keyword>
<keyword id="KW-1015">Disulfide bond</keyword>
<keyword id="KW-0646">Protease inhibitor</keyword>
<keyword id="KW-0964">Secreted</keyword>
<keyword id="KW-0722">Serine protease inhibitor</keyword>
<organism evidence="4">
    <name type="scientific">Delonix regia</name>
    <name type="common">Royal poinciana</name>
    <name type="synonym">Poinciana regia</name>
    <dbReference type="NCBI Taxonomy" id="72433"/>
    <lineage>
        <taxon>Eukaryota</taxon>
        <taxon>Viridiplantae</taxon>
        <taxon>Streptophyta</taxon>
        <taxon>Embryophyta</taxon>
        <taxon>Tracheophyta</taxon>
        <taxon>Spermatophyta</taxon>
        <taxon>Magnoliopsida</taxon>
        <taxon>eudicotyledons</taxon>
        <taxon>Gunneridae</taxon>
        <taxon>Pentapetalae</taxon>
        <taxon>rosids</taxon>
        <taxon>fabids</taxon>
        <taxon>Fabales</taxon>
        <taxon>Fabaceae</taxon>
        <taxon>Caesalpinioideae</taxon>
        <taxon>Peltophorum clade</taxon>
        <taxon>Delonix</taxon>
    </lineage>
</organism>
<sequence length="185" mass="20094">SDAEKVYDIEGYPVFLGSEYYIVSAIIGAGGGGVRPGRTRGSMCPMSIIQEQSDLQMGLPVRFSSPEESQGKIYTDTELEIEFVEKPDCAESSKWVIVKDSGEARVAIGGSEDHPQGELVRGFFKIEKLGSLAYKLVFCPKSSSGSCSDIGINYEGRRSLVLKSSDDSPFRVVFVKPRSGSETES</sequence>
<reference evidence="4" key="1">
    <citation type="journal article" date="2001" name="Phytochemistry">
        <title>Primary sequence determination of a Kunitz inhibitor isolated from Delonix regia seeds.</title>
        <authorList>
            <person name="Pando S.C."/>
            <person name="Oliva M.L.V."/>
            <person name="Sampaio C.A.M."/>
            <person name="Di Ciero L."/>
            <person name="Novello J.C."/>
            <person name="Marangoni S."/>
        </authorList>
    </citation>
    <scope>PROTEIN SEQUENCE</scope>
    <scope>FUNCTION</scope>
    <source>
        <tissue evidence="3">Seed</tissue>
    </source>
</reference>
<dbReference type="PDB" id="1R8N">
    <property type="method" value="X-ray"/>
    <property type="resolution" value="1.75 A"/>
    <property type="chains" value="A=1-185"/>
</dbReference>
<dbReference type="PDBsum" id="1R8N"/>
<dbReference type="SMR" id="P83667"/>
<dbReference type="EvolutionaryTrace" id="P83667"/>
<dbReference type="GO" id="GO:0005576">
    <property type="term" value="C:extracellular region"/>
    <property type="evidence" value="ECO:0007669"/>
    <property type="project" value="UniProtKB-SubCell"/>
</dbReference>
<dbReference type="GO" id="GO:0004867">
    <property type="term" value="F:serine-type endopeptidase inhibitor activity"/>
    <property type="evidence" value="ECO:0000314"/>
    <property type="project" value="UniProtKB"/>
</dbReference>
<dbReference type="CDD" id="cd23376">
    <property type="entry name" value="beta-trefoil_STI_DrTI"/>
    <property type="match status" value="1"/>
</dbReference>
<dbReference type="Gene3D" id="2.80.10.50">
    <property type="match status" value="1"/>
</dbReference>
<dbReference type="InterPro" id="IPR011065">
    <property type="entry name" value="Kunitz_inhibitor_STI-like_sf"/>
</dbReference>
<dbReference type="InterPro" id="IPR002160">
    <property type="entry name" value="Prot_inh_Kunz-lg"/>
</dbReference>
<dbReference type="PANTHER" id="PTHR33107:SF21">
    <property type="entry name" value="KUNITZ FAMILY TRYPSIN AND PROTEASE INHIBITOR PROTEIN"/>
    <property type="match status" value="1"/>
</dbReference>
<dbReference type="PANTHER" id="PTHR33107">
    <property type="entry name" value="KUNITZ TRYPSIN INHIBITOR 2"/>
    <property type="match status" value="1"/>
</dbReference>
<dbReference type="Pfam" id="PF00197">
    <property type="entry name" value="Kunitz_legume"/>
    <property type="match status" value="1"/>
</dbReference>
<dbReference type="PRINTS" id="PR00291">
    <property type="entry name" value="KUNITZINHBTR"/>
</dbReference>
<dbReference type="SMART" id="SM00452">
    <property type="entry name" value="STI"/>
    <property type="match status" value="1"/>
</dbReference>
<dbReference type="SUPFAM" id="SSF50386">
    <property type="entry name" value="STI-like"/>
    <property type="match status" value="1"/>
</dbReference>
<evidence type="ECO:0000250" key="1"/>
<evidence type="ECO:0000255" key="2"/>
<evidence type="ECO:0000269" key="3">
    <source>
    </source>
</evidence>
<evidence type="ECO:0000305" key="4"/>
<evidence type="ECO:0007829" key="5">
    <source>
        <dbReference type="PDB" id="1R8N"/>
    </source>
</evidence>
<name>DRTI_DELRE</name>
<proteinExistence type="evidence at protein level"/>
<protein>
    <recommendedName>
        <fullName>Kunitz-type serine protease inhibitor DrTI</fullName>
    </recommendedName>
</protein>
<accession>P83667</accession>
<comment type="function">
    <text evidence="3">Inhibits bovine trypsin and human plasma kallikrein.</text>
</comment>
<comment type="subcellular location">
    <subcellularLocation>
        <location>Secreted</location>
    </subcellularLocation>
</comment>
<comment type="similarity">
    <text evidence="4">Belongs to the protease inhibitor I3 (leguminous Kunitz-type inhibitor) family.</text>
</comment>
<comment type="caution">
    <text evidence="4">The reactive bond has a Glu in position P1 instead of an expected Arg or Lys.</text>
</comment>